<evidence type="ECO:0000250" key="1"/>
<evidence type="ECO:0000256" key="2">
    <source>
        <dbReference type="SAM" id="MobiDB-lite"/>
    </source>
</evidence>
<evidence type="ECO:0000305" key="3"/>
<organism>
    <name type="scientific">Caenorhabditis elegans</name>
    <dbReference type="NCBI Taxonomy" id="6239"/>
    <lineage>
        <taxon>Eukaryota</taxon>
        <taxon>Metazoa</taxon>
        <taxon>Ecdysozoa</taxon>
        <taxon>Nematoda</taxon>
        <taxon>Chromadorea</taxon>
        <taxon>Rhabditida</taxon>
        <taxon>Rhabditina</taxon>
        <taxon>Rhabditomorpha</taxon>
        <taxon>Rhabditoidea</taxon>
        <taxon>Rhabditidae</taxon>
        <taxon>Peloderinae</taxon>
        <taxon>Caenorhabditis</taxon>
    </lineage>
</organism>
<keyword id="KW-0112">Calmodulin-binding</keyword>
<keyword id="KW-0119">Carbohydrate metabolism</keyword>
<keyword id="KW-0321">Glycogen metabolism</keyword>
<keyword id="KW-1185">Reference proteome</keyword>
<name>KPBA_CAEEL</name>
<sequence>MRSRSGSGVRLDRILFMVEQTICSHQNPITALFANQKDFPGHAWVRDNVYIAQALWALYRAYMKCADFDEDLTKAKELGFTCVKMMQSILECLMRQAEKVELFKKYQRPLDALHSKFAVGTKGTVCGDADWGHLQMDAISLYLLTLAQITASGLQVVRNFDEVAFIQNLVYYIETGYRTPDYGVWERGDKTNQGIRELNASSIGMVKAALQALNDVGDLFVDGSRGSVVHVLPDEIEQCSAVLSSMLPRESFSKETDAALLGIISYPAFCVEDPELVSQTRETITQRLLGKYGCRRFMRDGYKTVLEDASRLYYNKSELQQFEDIECEWPIFLCYLILDAMYSKDDDAVEAYWRQLESVLVLSDKGFRLVPELYVVLKEHVSAEKAHPGTQDRVPGGATPFLWAQSLYVIICLLYEGFLLPAELDPLSRRLSVYEKRPPCEVQVTVLAESLDVQRELRAHDIHVQCVDEIDPVFTILPASALGQLLAKIGESKKLNLSGRPLDRPIGLLSTSRLYQIGNKFVIFTPQFMDSRRSHLMYDIRILTDEWSSELQYIYASWNSVSISGRPLVVLVITQGMLSTEGLSHFSNIHLNRHMKSTVIGAIKKINTGYLSGARVVMKDLSDFFRTTAVSKMEFRDKSAEDTLRSVAAEKVQFTLLTEDATEAKNEKITTPRGPRTLRRGESVKDRSAYTAVHKASMRHRSIALDSNDADLMKLRLAYKSRPRDLQDMDSTYQSPPPTQTPLGLVKEHSSGELRQQLLKTTRRGAENETTHRDLTAEQMNEMKADDLLDLVNETTVLEEQISIVHCLWMKFGPDYDTELGCQHITVRMLMEEVHTKACEAREWALVRLTAGLLKKQLEELSKAVTHLLVRQKQITVGIASKKEEVITCPKTNEELEKIMNRAYGDDANSFTLAQEIIVYLGSLVRTEPKLFLEMFRLRIGLIIQVLASELSRLRNISGAEAAETLLTVSPFELKSMIFSLLSGRLLEEYAEDGIHYSDTIRETRTGIGSFRRQIEERKSLRKSTRSVGGLEIPKEEDEDEEADEDDFQFGIWLRHRRIDGALNRVPNGFYAILWDTVHKMPHGVKINDTVLHWGLTQEMTRKEIKFALESEEALNRIAEPEYRELVVETLWLLGRLEKLVLLEQPNIPRDRPLDVDHILHVANQIFVDHNKHLETIVMECCASSNPNNTRCDGARNICKHFYDSAPAGEYGTSHYIIRALMQLYS</sequence>
<feature type="chain" id="PRO_0000057734" description="Probable phosphorylase b kinase regulatory subunit alpha">
    <location>
        <begin position="1"/>
        <end position="1226"/>
    </location>
</feature>
<feature type="region of interest" description="Disordered" evidence="2">
    <location>
        <begin position="666"/>
        <end position="688"/>
    </location>
</feature>
<feature type="compositionally biased region" description="Basic and acidic residues" evidence="2">
    <location>
        <begin position="679"/>
        <end position="688"/>
    </location>
</feature>
<proteinExistence type="inferred from homology"/>
<accession>P34335</accession>
<reference key="1">
    <citation type="journal article" date="1994" name="Nature">
        <title>2.2 Mb of contiguous nucleotide sequence from chromosome III of C. elegans.</title>
        <authorList>
            <person name="Wilson R."/>
            <person name="Ainscough R."/>
            <person name="Anderson K."/>
            <person name="Baynes C."/>
            <person name="Berks M."/>
            <person name="Bonfield J."/>
            <person name="Burton J."/>
            <person name="Connell M."/>
            <person name="Copsey T."/>
            <person name="Cooper J."/>
            <person name="Coulson A."/>
            <person name="Craxton M."/>
            <person name="Dear S."/>
            <person name="Du Z."/>
            <person name="Durbin R."/>
            <person name="Favello A."/>
            <person name="Fraser A."/>
            <person name="Fulton L."/>
            <person name="Gardner A."/>
            <person name="Green P."/>
            <person name="Hawkins T."/>
            <person name="Hillier L."/>
            <person name="Jier M."/>
            <person name="Johnston L."/>
            <person name="Jones M."/>
            <person name="Kershaw J."/>
            <person name="Kirsten J."/>
            <person name="Laisster N."/>
            <person name="Latreille P."/>
            <person name="Lightning J."/>
            <person name="Lloyd C."/>
            <person name="Mortimore B."/>
            <person name="O'Callaghan M."/>
            <person name="Parsons J."/>
            <person name="Percy C."/>
            <person name="Rifken L."/>
            <person name="Roopra A."/>
            <person name="Saunders D."/>
            <person name="Shownkeen R."/>
            <person name="Sims M."/>
            <person name="Smaldon N."/>
            <person name="Smith A."/>
            <person name="Smith M."/>
            <person name="Sonnhammer E."/>
            <person name="Staden R."/>
            <person name="Sulston J."/>
            <person name="Thierry-Mieg J."/>
            <person name="Thomas K."/>
            <person name="Vaudin M."/>
            <person name="Vaughan K."/>
            <person name="Waterston R."/>
            <person name="Watson A."/>
            <person name="Weinstock L."/>
            <person name="Wilkinson-Sproat J."/>
            <person name="Wohldman P."/>
        </authorList>
    </citation>
    <scope>NUCLEOTIDE SEQUENCE [LARGE SCALE GENOMIC DNA]</scope>
    <source>
        <strain>Bristol N2</strain>
    </source>
</reference>
<reference key="2">
    <citation type="journal article" date="1998" name="Science">
        <title>Genome sequence of the nematode C. elegans: a platform for investigating biology.</title>
        <authorList>
            <consortium name="The C. elegans sequencing consortium"/>
        </authorList>
    </citation>
    <scope>NUCLEOTIDE SEQUENCE [LARGE SCALE GENOMIC DNA]</scope>
    <source>
        <strain>Bristol N2</strain>
    </source>
</reference>
<protein>
    <recommendedName>
        <fullName>Probable phosphorylase b kinase regulatory subunit alpha</fullName>
        <shortName>Phosphorylase kinase subunit alpha</shortName>
    </recommendedName>
</protein>
<gene>
    <name type="ORF">C14B9.8</name>
</gene>
<dbReference type="EMBL" id="FO080531">
    <property type="protein sequence ID" value="CCD64441.1"/>
    <property type="molecule type" value="Genomic_DNA"/>
</dbReference>
<dbReference type="PIR" id="S44754">
    <property type="entry name" value="S44754"/>
</dbReference>
<dbReference type="RefSeq" id="NP_498777.2">
    <property type="nucleotide sequence ID" value="NM_066376.7"/>
</dbReference>
<dbReference type="SMR" id="P34335"/>
<dbReference type="BioGRID" id="41355">
    <property type="interactions" value="1"/>
</dbReference>
<dbReference type="FunCoup" id="P34335">
    <property type="interactions" value="1999"/>
</dbReference>
<dbReference type="STRING" id="6239.C14B9.8b.1"/>
<dbReference type="iPTMnet" id="P34335"/>
<dbReference type="PaxDb" id="6239-C14B9.8"/>
<dbReference type="PeptideAtlas" id="P34335"/>
<dbReference type="EnsemblMetazoa" id="C14B9.8a.1">
    <property type="protein sequence ID" value="C14B9.8a.1"/>
    <property type="gene ID" value="WBGene00015754"/>
</dbReference>
<dbReference type="GeneID" id="176149"/>
<dbReference type="KEGG" id="cel:CELE_C14B9.8"/>
<dbReference type="UCSC" id="C14B9.8">
    <property type="organism name" value="c. elegans"/>
</dbReference>
<dbReference type="AGR" id="WB:WBGene00015754"/>
<dbReference type="CTD" id="176149"/>
<dbReference type="WormBase" id="C14B9.8a">
    <property type="protein sequence ID" value="CE38273"/>
    <property type="gene ID" value="WBGene00015754"/>
</dbReference>
<dbReference type="eggNOG" id="KOG3635">
    <property type="taxonomic scope" value="Eukaryota"/>
</dbReference>
<dbReference type="GeneTree" id="ENSGT00950000183118"/>
<dbReference type="HOGENOM" id="CLU_004177_0_1_1"/>
<dbReference type="InParanoid" id="P34335"/>
<dbReference type="OMA" id="QFEHIEC"/>
<dbReference type="OrthoDB" id="5971574at2759"/>
<dbReference type="PhylomeDB" id="P34335"/>
<dbReference type="BRENDA" id="2.7.11.19">
    <property type="organism ID" value="1045"/>
</dbReference>
<dbReference type="Reactome" id="R-CEL-70221">
    <property type="pathway name" value="Glycogen breakdown (glycogenolysis)"/>
</dbReference>
<dbReference type="UniPathway" id="UPA00163"/>
<dbReference type="PRO" id="PR:P34335"/>
<dbReference type="Proteomes" id="UP000001940">
    <property type="component" value="Chromosome III"/>
</dbReference>
<dbReference type="Bgee" id="WBGene00015754">
    <property type="expression patterns" value="Expressed in germ line (C elegans) and 4 other cell types or tissues"/>
</dbReference>
<dbReference type="ExpressionAtlas" id="P34335">
    <property type="expression patterns" value="baseline and differential"/>
</dbReference>
<dbReference type="GO" id="GO:0005516">
    <property type="term" value="F:calmodulin binding"/>
    <property type="evidence" value="ECO:0007669"/>
    <property type="project" value="UniProtKB-KW"/>
</dbReference>
<dbReference type="GO" id="GO:0005977">
    <property type="term" value="P:glycogen metabolic process"/>
    <property type="evidence" value="ECO:0007669"/>
    <property type="project" value="UniProtKB-UniPathway"/>
</dbReference>
<dbReference type="FunFam" id="1.50.10.10:FF:000067">
    <property type="entry name" value="Phosphorylase b kinase regulatory subunit"/>
    <property type="match status" value="1"/>
</dbReference>
<dbReference type="Gene3D" id="1.50.10.10">
    <property type="match status" value="1"/>
</dbReference>
<dbReference type="InterPro" id="IPR008928">
    <property type="entry name" value="6-hairpin_glycosidase_sf"/>
</dbReference>
<dbReference type="InterPro" id="IPR012341">
    <property type="entry name" value="6hp_glycosidase-like_sf"/>
</dbReference>
<dbReference type="InterPro" id="IPR011613">
    <property type="entry name" value="GH15-like"/>
</dbReference>
<dbReference type="InterPro" id="IPR045583">
    <property type="entry name" value="KPBA/B_C"/>
</dbReference>
<dbReference type="InterPro" id="IPR008734">
    <property type="entry name" value="PHK_A/B_su"/>
</dbReference>
<dbReference type="PANTHER" id="PTHR10749">
    <property type="entry name" value="PHOSPHORYLASE B KINASE REGULATORY SUBUNIT"/>
    <property type="match status" value="1"/>
</dbReference>
<dbReference type="PANTHER" id="PTHR10749:SF7">
    <property type="entry name" value="PHOSPHORYLASE B KINASE REGULATORY SUBUNIT ALPHA-RELATED"/>
    <property type="match status" value="1"/>
</dbReference>
<dbReference type="Pfam" id="PF00723">
    <property type="entry name" value="Glyco_hydro_15"/>
    <property type="match status" value="1"/>
</dbReference>
<dbReference type="Pfam" id="PF19292">
    <property type="entry name" value="KPBB_C"/>
    <property type="match status" value="1"/>
</dbReference>
<dbReference type="SUPFAM" id="SSF48208">
    <property type="entry name" value="Six-hairpin glycosidases"/>
    <property type="match status" value="1"/>
</dbReference>
<comment type="function">
    <text evidence="1">Phosphorylase b kinase catalyzes the phosphorylation of serine in certain substrates, including troponin I. The alpha chain may bind calmodulin (By similarity).</text>
</comment>
<comment type="pathway">
    <text>Glycan biosynthesis; glycogen metabolism.</text>
</comment>
<comment type="similarity">
    <text evidence="3">Belongs to the phosphorylase b kinase regulatory chain family.</text>
</comment>